<proteinExistence type="inferred from homology"/>
<protein>
    <recommendedName>
        <fullName evidence="2">Small ribosomal subunit protein uS12cz/uS12cy</fullName>
    </recommendedName>
    <alternativeName>
        <fullName evidence="3">30S ribosomal protein S12, chloroplastic</fullName>
    </alternativeName>
</protein>
<dbReference type="EMBL" id="AP009367">
    <property type="protein sequence ID" value="BAF49878.1"/>
    <property type="molecule type" value="Genomic_DNA"/>
</dbReference>
<dbReference type="EMBL" id="AP009367">
    <property type="protein sequence ID" value="BAF49900.1"/>
    <property type="molecule type" value="Genomic_DNA"/>
</dbReference>
<dbReference type="SMR" id="A4QJM3"/>
<dbReference type="GO" id="GO:0009507">
    <property type="term" value="C:chloroplast"/>
    <property type="evidence" value="ECO:0007669"/>
    <property type="project" value="UniProtKB-SubCell"/>
</dbReference>
<dbReference type="GO" id="GO:0015935">
    <property type="term" value="C:small ribosomal subunit"/>
    <property type="evidence" value="ECO:0007669"/>
    <property type="project" value="InterPro"/>
</dbReference>
<dbReference type="GO" id="GO:0019843">
    <property type="term" value="F:rRNA binding"/>
    <property type="evidence" value="ECO:0007669"/>
    <property type="project" value="UniProtKB-UniRule"/>
</dbReference>
<dbReference type="GO" id="GO:0003735">
    <property type="term" value="F:structural constituent of ribosome"/>
    <property type="evidence" value="ECO:0007669"/>
    <property type="project" value="InterPro"/>
</dbReference>
<dbReference type="GO" id="GO:0006412">
    <property type="term" value="P:translation"/>
    <property type="evidence" value="ECO:0007669"/>
    <property type="project" value="UniProtKB-UniRule"/>
</dbReference>
<dbReference type="CDD" id="cd03368">
    <property type="entry name" value="Ribosomal_S12"/>
    <property type="match status" value="1"/>
</dbReference>
<dbReference type="FunFam" id="2.40.50.140:FF:000008">
    <property type="entry name" value="30S ribosomal protein S12, chloroplastic"/>
    <property type="match status" value="1"/>
</dbReference>
<dbReference type="Gene3D" id="2.40.50.140">
    <property type="entry name" value="Nucleic acid-binding proteins"/>
    <property type="match status" value="1"/>
</dbReference>
<dbReference type="HAMAP" id="MF_00403_B">
    <property type="entry name" value="Ribosomal_uS12_B"/>
    <property type="match status" value="1"/>
</dbReference>
<dbReference type="InterPro" id="IPR012340">
    <property type="entry name" value="NA-bd_OB-fold"/>
</dbReference>
<dbReference type="InterPro" id="IPR006032">
    <property type="entry name" value="Ribosomal_uS12"/>
</dbReference>
<dbReference type="InterPro" id="IPR005679">
    <property type="entry name" value="Ribosomal_uS12_bac"/>
</dbReference>
<dbReference type="NCBIfam" id="TIGR00981">
    <property type="entry name" value="rpsL_bact"/>
    <property type="match status" value="1"/>
</dbReference>
<dbReference type="PANTHER" id="PTHR11652">
    <property type="entry name" value="30S RIBOSOMAL PROTEIN S12 FAMILY MEMBER"/>
    <property type="match status" value="1"/>
</dbReference>
<dbReference type="Pfam" id="PF00164">
    <property type="entry name" value="Ribosom_S12_S23"/>
    <property type="match status" value="1"/>
</dbReference>
<dbReference type="PIRSF" id="PIRSF002133">
    <property type="entry name" value="Ribosomal_S12/S23"/>
    <property type="match status" value="1"/>
</dbReference>
<dbReference type="PRINTS" id="PR01034">
    <property type="entry name" value="RIBOSOMALS12"/>
</dbReference>
<dbReference type="SUPFAM" id="SSF50249">
    <property type="entry name" value="Nucleic acid-binding proteins"/>
    <property type="match status" value="1"/>
</dbReference>
<dbReference type="PROSITE" id="PS00055">
    <property type="entry name" value="RIBOSOMAL_S12"/>
    <property type="match status" value="1"/>
</dbReference>
<evidence type="ECO:0000250" key="1"/>
<evidence type="ECO:0000255" key="2">
    <source>
        <dbReference type="HAMAP-Rule" id="MF_00403"/>
    </source>
</evidence>
<evidence type="ECO:0000305" key="3"/>
<name>RR12_AETGR</name>
<keyword id="KW-0150">Chloroplast</keyword>
<keyword id="KW-0934">Plastid</keyword>
<keyword id="KW-0687">Ribonucleoprotein</keyword>
<keyword id="KW-0689">Ribosomal protein</keyword>
<keyword id="KW-0694">RNA-binding</keyword>
<keyword id="KW-0699">rRNA-binding</keyword>
<organism>
    <name type="scientific">Aethionema grandiflorum</name>
    <name type="common">Persian stone-cress</name>
    <dbReference type="NCBI Taxonomy" id="72657"/>
    <lineage>
        <taxon>Eukaryota</taxon>
        <taxon>Viridiplantae</taxon>
        <taxon>Streptophyta</taxon>
        <taxon>Embryophyta</taxon>
        <taxon>Tracheophyta</taxon>
        <taxon>Spermatophyta</taxon>
        <taxon>Magnoliopsida</taxon>
        <taxon>eudicotyledons</taxon>
        <taxon>Gunneridae</taxon>
        <taxon>Pentapetalae</taxon>
        <taxon>rosids</taxon>
        <taxon>malvids</taxon>
        <taxon>Brassicales</taxon>
        <taxon>Brassicaceae</taxon>
        <taxon>Aethionemeae</taxon>
        <taxon>Aethionema</taxon>
    </lineage>
</organism>
<sequence>MPTIKQLIRNTRQPIRNVTKSPALRGCPQRRGTCTRVYTITPKKPNSALRKVARVRLTSGFEITAYIPGIGHNLQEHSVVLVRGGRVKDLPGVRYHIVRGTLDAVGVKDRQQGRSKYGVKKPK</sequence>
<feature type="chain" id="PRO_0000296060" description="Small ribosomal subunit protein uS12cz/uS12cy">
    <location>
        <begin position="1"/>
        <end position="123"/>
    </location>
</feature>
<accession>A4QJM3</accession>
<comment type="function">
    <text evidence="1">With S4 and S5 plays an important role in translational accuracy. Located at the interface of the 30S and 50S subunits (By similarity).</text>
</comment>
<comment type="subunit">
    <text evidence="1">Part of the 30S ribosomal subunit.</text>
</comment>
<comment type="subcellular location">
    <subcellularLocation>
        <location>Plastid</location>
        <location>Chloroplast</location>
    </subcellularLocation>
</comment>
<comment type="similarity">
    <text evidence="3">Belongs to the universal ribosomal protein uS12 family.</text>
</comment>
<geneLocation type="chloroplast"/>
<gene>
    <name type="primary">rps12-A</name>
</gene>
<gene>
    <name type="primary">rps12-B</name>
</gene>
<reference key="1">
    <citation type="submission" date="2007-03" db="EMBL/GenBank/DDBJ databases">
        <title>Sequencing analysis of Aethionema grandiflorum chloroplast DNA.</title>
        <authorList>
            <person name="Hosouchi T."/>
            <person name="Tsuruoka H."/>
            <person name="Kotani H."/>
        </authorList>
    </citation>
    <scope>NUCLEOTIDE SEQUENCE [LARGE SCALE GENOMIC DNA]</scope>
</reference>